<sequence length="110" mass="12493">MKGRRPSHRRQLIPPLLTGLRVKVLAHSDPSLEGLEGWVVVEEARSLRILTLEGRVSTVLKDLAVIEVEAPGGEYIRISGRVLIGNPLDRVKEYRWRVSRRCRSSSRLKT</sequence>
<dbReference type="EC" id="3.1.26.5" evidence="1"/>
<dbReference type="EMBL" id="BA000002">
    <property type="protein sequence ID" value="BAA79317.1"/>
    <property type="molecule type" value="Genomic_DNA"/>
</dbReference>
<dbReference type="PIR" id="A72728">
    <property type="entry name" value="A72728"/>
</dbReference>
<dbReference type="RefSeq" id="WP_010865692.1">
    <property type="nucleotide sequence ID" value="NC_000854.2"/>
</dbReference>
<dbReference type="SMR" id="Q9YF79"/>
<dbReference type="STRING" id="272557.APE_0362"/>
<dbReference type="EnsemblBacteria" id="BAA79317">
    <property type="protein sequence ID" value="BAA79317"/>
    <property type="gene ID" value="APE_0362"/>
</dbReference>
<dbReference type="GeneID" id="1444575"/>
<dbReference type="KEGG" id="ape:APE_0362"/>
<dbReference type="eggNOG" id="arCOG00784">
    <property type="taxonomic scope" value="Archaea"/>
</dbReference>
<dbReference type="Proteomes" id="UP000002518">
    <property type="component" value="Chromosome"/>
</dbReference>
<dbReference type="GO" id="GO:0005737">
    <property type="term" value="C:cytoplasm"/>
    <property type="evidence" value="ECO:0007669"/>
    <property type="project" value="UniProtKB-SubCell"/>
</dbReference>
<dbReference type="GO" id="GO:0030677">
    <property type="term" value="C:ribonuclease P complex"/>
    <property type="evidence" value="ECO:0007669"/>
    <property type="project" value="UniProtKB-UniRule"/>
</dbReference>
<dbReference type="GO" id="GO:0004526">
    <property type="term" value="F:ribonuclease P activity"/>
    <property type="evidence" value="ECO:0007669"/>
    <property type="project" value="UniProtKB-UniRule"/>
</dbReference>
<dbReference type="GO" id="GO:0003723">
    <property type="term" value="F:RNA binding"/>
    <property type="evidence" value="ECO:0007669"/>
    <property type="project" value="InterPro"/>
</dbReference>
<dbReference type="GO" id="GO:0001682">
    <property type="term" value="P:tRNA 5'-leader removal"/>
    <property type="evidence" value="ECO:0007669"/>
    <property type="project" value="UniProtKB-UniRule"/>
</dbReference>
<dbReference type="Gene3D" id="2.30.30.210">
    <property type="entry name" value="Ribonuclease P/MRP, subunit p29"/>
    <property type="match status" value="1"/>
</dbReference>
<dbReference type="HAMAP" id="MF_00754">
    <property type="entry name" value="RNase_P_1"/>
    <property type="match status" value="1"/>
</dbReference>
<dbReference type="InterPro" id="IPR036980">
    <property type="entry name" value="RNase_P/MRP_Rpp29_sf"/>
</dbReference>
<dbReference type="InterPro" id="IPR023538">
    <property type="entry name" value="RNP1"/>
</dbReference>
<dbReference type="InterPro" id="IPR023534">
    <property type="entry name" value="Rof/RNase_P-like"/>
</dbReference>
<dbReference type="InterPro" id="IPR002730">
    <property type="entry name" value="Rpp29/RNP1"/>
</dbReference>
<dbReference type="Pfam" id="PF01868">
    <property type="entry name" value="RNase_P-MRP_p29"/>
    <property type="match status" value="1"/>
</dbReference>
<dbReference type="SMART" id="SM00538">
    <property type="entry name" value="POP4"/>
    <property type="match status" value="1"/>
</dbReference>
<dbReference type="SUPFAM" id="SSF101744">
    <property type="entry name" value="Rof/RNase P subunit-like"/>
    <property type="match status" value="1"/>
</dbReference>
<comment type="function">
    <text evidence="1">Part of ribonuclease P, a protein complex that generates mature tRNA molecules by cleaving their 5'-ends.</text>
</comment>
<comment type="catalytic activity">
    <reaction evidence="1">
        <text>Endonucleolytic cleavage of RNA, removing 5'-extranucleotides from tRNA precursor.</text>
        <dbReference type="EC" id="3.1.26.5"/>
    </reaction>
</comment>
<comment type="subunit">
    <text evidence="1">Consists of a catalytic RNA component and at least 4-5 protein subunits.</text>
</comment>
<comment type="subcellular location">
    <subcellularLocation>
        <location evidence="1">Cytoplasm</location>
    </subcellularLocation>
</comment>
<comment type="similarity">
    <text evidence="1">Belongs to the eukaryotic/archaeal RNase P protein component 1 family.</text>
</comment>
<gene>
    <name evidence="1" type="primary">rnp1</name>
    <name type="ordered locus">APE_0362</name>
</gene>
<protein>
    <recommendedName>
        <fullName evidence="1">Ribonuclease P protein component 1</fullName>
        <shortName evidence="1">RNase P component 1</shortName>
        <ecNumber evidence="1">3.1.26.5</ecNumber>
    </recommendedName>
    <alternativeName>
        <fullName evidence="1">Rpp29</fullName>
    </alternativeName>
</protein>
<reference key="1">
    <citation type="journal article" date="1999" name="DNA Res.">
        <title>Complete genome sequence of an aerobic hyper-thermophilic crenarchaeon, Aeropyrum pernix K1.</title>
        <authorList>
            <person name="Kawarabayasi Y."/>
            <person name="Hino Y."/>
            <person name="Horikawa H."/>
            <person name="Yamazaki S."/>
            <person name="Haikawa Y."/>
            <person name="Jin-no K."/>
            <person name="Takahashi M."/>
            <person name="Sekine M."/>
            <person name="Baba S."/>
            <person name="Ankai A."/>
            <person name="Kosugi H."/>
            <person name="Hosoyama A."/>
            <person name="Fukui S."/>
            <person name="Nagai Y."/>
            <person name="Nishijima K."/>
            <person name="Nakazawa H."/>
            <person name="Takamiya M."/>
            <person name="Masuda S."/>
            <person name="Funahashi T."/>
            <person name="Tanaka T."/>
            <person name="Kudoh Y."/>
            <person name="Yamazaki J."/>
            <person name="Kushida N."/>
            <person name="Oguchi A."/>
            <person name="Aoki K."/>
            <person name="Kubota K."/>
            <person name="Nakamura Y."/>
            <person name="Nomura N."/>
            <person name="Sako Y."/>
            <person name="Kikuchi H."/>
        </authorList>
    </citation>
    <scope>NUCLEOTIDE SEQUENCE [LARGE SCALE GENOMIC DNA]</scope>
    <source>
        <strain>ATCC 700893 / DSM 11879 / JCM 9820 / NBRC 100138 / K1</strain>
    </source>
</reference>
<organism>
    <name type="scientific">Aeropyrum pernix (strain ATCC 700893 / DSM 11879 / JCM 9820 / NBRC 100138 / K1)</name>
    <dbReference type="NCBI Taxonomy" id="272557"/>
    <lineage>
        <taxon>Archaea</taxon>
        <taxon>Thermoproteota</taxon>
        <taxon>Thermoprotei</taxon>
        <taxon>Desulfurococcales</taxon>
        <taxon>Desulfurococcaceae</taxon>
        <taxon>Aeropyrum</taxon>
    </lineage>
</organism>
<proteinExistence type="inferred from homology"/>
<keyword id="KW-0963">Cytoplasm</keyword>
<keyword id="KW-0255">Endonuclease</keyword>
<keyword id="KW-0378">Hydrolase</keyword>
<keyword id="KW-0540">Nuclease</keyword>
<keyword id="KW-1185">Reference proteome</keyword>
<keyword id="KW-0819">tRNA processing</keyword>
<accession>Q9YF79</accession>
<name>RNP1_AERPE</name>
<feature type="chain" id="PRO_0000128424" description="Ribonuclease P protein component 1">
    <location>
        <begin position="1"/>
        <end position="110"/>
    </location>
</feature>
<evidence type="ECO:0000255" key="1">
    <source>
        <dbReference type="HAMAP-Rule" id="MF_00754"/>
    </source>
</evidence>